<keyword id="KW-0067">ATP-binding</keyword>
<keyword id="KW-0315">Glutamine amidotransferase</keyword>
<keyword id="KW-0436">Ligase</keyword>
<keyword id="KW-0460">Magnesium</keyword>
<keyword id="KW-0479">Metal-binding</keyword>
<keyword id="KW-0547">Nucleotide-binding</keyword>
<keyword id="KW-0665">Pyrimidine biosynthesis</keyword>
<keyword id="KW-1185">Reference proteome</keyword>
<evidence type="ECO:0000255" key="1">
    <source>
        <dbReference type="HAMAP-Rule" id="MF_01227"/>
    </source>
</evidence>
<proteinExistence type="inferred from homology"/>
<protein>
    <recommendedName>
        <fullName evidence="1">CTP synthase</fullName>
        <ecNumber evidence="1">6.3.4.2</ecNumber>
    </recommendedName>
    <alternativeName>
        <fullName evidence="1">Cytidine 5'-triphosphate synthase</fullName>
    </alternativeName>
    <alternativeName>
        <fullName evidence="1">Cytidine triphosphate synthetase</fullName>
        <shortName evidence="1">CTP synthetase</shortName>
        <shortName evidence="1">CTPS</shortName>
    </alternativeName>
    <alternativeName>
        <fullName evidence="1">UTP--ammonia ligase</fullName>
    </alternativeName>
</protein>
<dbReference type="EC" id="6.3.4.2" evidence="1"/>
<dbReference type="EMBL" id="CP001339">
    <property type="protein sequence ID" value="ACL72268.1"/>
    <property type="molecule type" value="Genomic_DNA"/>
</dbReference>
<dbReference type="RefSeq" id="WP_012637751.1">
    <property type="nucleotide sequence ID" value="NC_011901.1"/>
</dbReference>
<dbReference type="SMR" id="B8GQ73"/>
<dbReference type="STRING" id="396588.Tgr7_1182"/>
<dbReference type="MEROPS" id="C26.964"/>
<dbReference type="KEGG" id="tgr:Tgr7_1182"/>
<dbReference type="eggNOG" id="COG0504">
    <property type="taxonomic scope" value="Bacteria"/>
</dbReference>
<dbReference type="HOGENOM" id="CLU_011675_5_0_6"/>
<dbReference type="OrthoDB" id="9801107at2"/>
<dbReference type="UniPathway" id="UPA00159">
    <property type="reaction ID" value="UER00277"/>
</dbReference>
<dbReference type="Proteomes" id="UP000002383">
    <property type="component" value="Chromosome"/>
</dbReference>
<dbReference type="GO" id="GO:0005829">
    <property type="term" value="C:cytosol"/>
    <property type="evidence" value="ECO:0007669"/>
    <property type="project" value="TreeGrafter"/>
</dbReference>
<dbReference type="GO" id="GO:0005524">
    <property type="term" value="F:ATP binding"/>
    <property type="evidence" value="ECO:0007669"/>
    <property type="project" value="UniProtKB-KW"/>
</dbReference>
<dbReference type="GO" id="GO:0003883">
    <property type="term" value="F:CTP synthase activity"/>
    <property type="evidence" value="ECO:0007669"/>
    <property type="project" value="UniProtKB-UniRule"/>
</dbReference>
<dbReference type="GO" id="GO:0004359">
    <property type="term" value="F:glutaminase activity"/>
    <property type="evidence" value="ECO:0007669"/>
    <property type="project" value="RHEA"/>
</dbReference>
<dbReference type="GO" id="GO:0042802">
    <property type="term" value="F:identical protein binding"/>
    <property type="evidence" value="ECO:0007669"/>
    <property type="project" value="TreeGrafter"/>
</dbReference>
<dbReference type="GO" id="GO:0046872">
    <property type="term" value="F:metal ion binding"/>
    <property type="evidence" value="ECO:0007669"/>
    <property type="project" value="UniProtKB-KW"/>
</dbReference>
<dbReference type="GO" id="GO:0044210">
    <property type="term" value="P:'de novo' CTP biosynthetic process"/>
    <property type="evidence" value="ECO:0007669"/>
    <property type="project" value="UniProtKB-UniRule"/>
</dbReference>
<dbReference type="GO" id="GO:0019856">
    <property type="term" value="P:pyrimidine nucleobase biosynthetic process"/>
    <property type="evidence" value="ECO:0007669"/>
    <property type="project" value="TreeGrafter"/>
</dbReference>
<dbReference type="CDD" id="cd03113">
    <property type="entry name" value="CTPS_N"/>
    <property type="match status" value="1"/>
</dbReference>
<dbReference type="CDD" id="cd01746">
    <property type="entry name" value="GATase1_CTP_Synthase"/>
    <property type="match status" value="1"/>
</dbReference>
<dbReference type="FunFam" id="3.40.50.300:FF:000009">
    <property type="entry name" value="CTP synthase"/>
    <property type="match status" value="1"/>
</dbReference>
<dbReference type="FunFam" id="3.40.50.880:FF:000002">
    <property type="entry name" value="CTP synthase"/>
    <property type="match status" value="1"/>
</dbReference>
<dbReference type="Gene3D" id="3.40.50.880">
    <property type="match status" value="1"/>
</dbReference>
<dbReference type="Gene3D" id="3.40.50.300">
    <property type="entry name" value="P-loop containing nucleotide triphosphate hydrolases"/>
    <property type="match status" value="1"/>
</dbReference>
<dbReference type="HAMAP" id="MF_01227">
    <property type="entry name" value="PyrG"/>
    <property type="match status" value="1"/>
</dbReference>
<dbReference type="InterPro" id="IPR029062">
    <property type="entry name" value="Class_I_gatase-like"/>
</dbReference>
<dbReference type="InterPro" id="IPR004468">
    <property type="entry name" value="CTP_synthase"/>
</dbReference>
<dbReference type="InterPro" id="IPR017456">
    <property type="entry name" value="CTP_synthase_N"/>
</dbReference>
<dbReference type="InterPro" id="IPR017926">
    <property type="entry name" value="GATASE"/>
</dbReference>
<dbReference type="InterPro" id="IPR033828">
    <property type="entry name" value="GATase1_CTP_Synthase"/>
</dbReference>
<dbReference type="InterPro" id="IPR027417">
    <property type="entry name" value="P-loop_NTPase"/>
</dbReference>
<dbReference type="NCBIfam" id="NF003792">
    <property type="entry name" value="PRK05380.1"/>
    <property type="match status" value="1"/>
</dbReference>
<dbReference type="NCBIfam" id="TIGR00337">
    <property type="entry name" value="PyrG"/>
    <property type="match status" value="1"/>
</dbReference>
<dbReference type="PANTHER" id="PTHR11550">
    <property type="entry name" value="CTP SYNTHASE"/>
    <property type="match status" value="1"/>
</dbReference>
<dbReference type="PANTHER" id="PTHR11550:SF0">
    <property type="entry name" value="CTP SYNTHASE-RELATED"/>
    <property type="match status" value="1"/>
</dbReference>
<dbReference type="Pfam" id="PF06418">
    <property type="entry name" value="CTP_synth_N"/>
    <property type="match status" value="1"/>
</dbReference>
<dbReference type="Pfam" id="PF00117">
    <property type="entry name" value="GATase"/>
    <property type="match status" value="1"/>
</dbReference>
<dbReference type="SUPFAM" id="SSF52317">
    <property type="entry name" value="Class I glutamine amidotransferase-like"/>
    <property type="match status" value="1"/>
</dbReference>
<dbReference type="SUPFAM" id="SSF52540">
    <property type="entry name" value="P-loop containing nucleoside triphosphate hydrolases"/>
    <property type="match status" value="1"/>
</dbReference>
<dbReference type="PROSITE" id="PS51273">
    <property type="entry name" value="GATASE_TYPE_1"/>
    <property type="match status" value="1"/>
</dbReference>
<sequence length="547" mass="60247">MTRYVFITGGVVSSLGKGIASASLAAILEARGLKVTLLKLDPYINVDPGTMSPFQHGEVFVTEDGAETDLDLGHYERFVRIKTGRRNNFTTGQIYENVIRKERRGDYLGGTVQVIPHITDEIKRSIRAGAEGADIALVEIGGTVGDIESLPFLEAIRQMGVEMGHENALFIHLTLVPYIAAAGEIKTKPTQHSVKELRSIGIQPDVLLCRANQPLPEGERRKIALFTNVEERAVISAVDVDNIYKIPLWLHSQKLDEIVLRKLHIDAPPADLSDWKHVVNAMEFPEAEVTVGMVGKYVDLTESYKSLNEALTHAGIHTGTKVTIRYLDSEKLETEGAGCLEDLDAILVPGGFGERGVEGKIAAVRYARENGIPYLGICLGMQVAVIEFARHVAGLEGAHSTEFRPNTPHPVIALITEWKDREGRIEQRSADSDLGGTMRLGGQVCQLTPGTLAHQCYGSDHITERHRHRYEFNNGYLETLTAAGLVISGRSEDGSLVEVVELKDHPWFLGCQFHPEFTSTPRDGHPLFSGFIRAARAQHEKTQTKSD</sequence>
<accession>B8GQ73</accession>
<comment type="function">
    <text evidence="1">Catalyzes the ATP-dependent amination of UTP to CTP with either L-glutamine or ammonia as the source of nitrogen. Regulates intracellular CTP levels through interactions with the four ribonucleotide triphosphates.</text>
</comment>
<comment type="catalytic activity">
    <reaction evidence="1">
        <text>UTP + L-glutamine + ATP + H2O = CTP + L-glutamate + ADP + phosphate + 2 H(+)</text>
        <dbReference type="Rhea" id="RHEA:26426"/>
        <dbReference type="ChEBI" id="CHEBI:15377"/>
        <dbReference type="ChEBI" id="CHEBI:15378"/>
        <dbReference type="ChEBI" id="CHEBI:29985"/>
        <dbReference type="ChEBI" id="CHEBI:30616"/>
        <dbReference type="ChEBI" id="CHEBI:37563"/>
        <dbReference type="ChEBI" id="CHEBI:43474"/>
        <dbReference type="ChEBI" id="CHEBI:46398"/>
        <dbReference type="ChEBI" id="CHEBI:58359"/>
        <dbReference type="ChEBI" id="CHEBI:456216"/>
        <dbReference type="EC" id="6.3.4.2"/>
    </reaction>
</comment>
<comment type="catalytic activity">
    <reaction evidence="1">
        <text>L-glutamine + H2O = L-glutamate + NH4(+)</text>
        <dbReference type="Rhea" id="RHEA:15889"/>
        <dbReference type="ChEBI" id="CHEBI:15377"/>
        <dbReference type="ChEBI" id="CHEBI:28938"/>
        <dbReference type="ChEBI" id="CHEBI:29985"/>
        <dbReference type="ChEBI" id="CHEBI:58359"/>
    </reaction>
</comment>
<comment type="catalytic activity">
    <reaction evidence="1">
        <text>UTP + NH4(+) + ATP = CTP + ADP + phosphate + 2 H(+)</text>
        <dbReference type="Rhea" id="RHEA:16597"/>
        <dbReference type="ChEBI" id="CHEBI:15378"/>
        <dbReference type="ChEBI" id="CHEBI:28938"/>
        <dbReference type="ChEBI" id="CHEBI:30616"/>
        <dbReference type="ChEBI" id="CHEBI:37563"/>
        <dbReference type="ChEBI" id="CHEBI:43474"/>
        <dbReference type="ChEBI" id="CHEBI:46398"/>
        <dbReference type="ChEBI" id="CHEBI:456216"/>
    </reaction>
</comment>
<comment type="activity regulation">
    <text evidence="1">Allosterically activated by GTP, when glutamine is the substrate; GTP has no effect on the reaction when ammonia is the substrate. The allosteric effector GTP functions by stabilizing the protein conformation that binds the tetrahedral intermediate(s) formed during glutamine hydrolysis. Inhibited by the product CTP, via allosteric rather than competitive inhibition.</text>
</comment>
<comment type="pathway">
    <text evidence="1">Pyrimidine metabolism; CTP biosynthesis via de novo pathway; CTP from UDP: step 2/2.</text>
</comment>
<comment type="subunit">
    <text evidence="1">Homotetramer.</text>
</comment>
<comment type="miscellaneous">
    <text evidence="1">CTPSs have evolved a hybrid strategy for distinguishing between UTP and CTP. The overlapping regions of the product feedback inhibitory and substrate sites recognize a common feature in both compounds, the triphosphate moiety. To differentiate isosteric substrate and product pyrimidine rings, an additional pocket far from the expected kinase/ligase catalytic site, specifically recognizes the cytosine and ribose portions of the product inhibitor.</text>
</comment>
<comment type="similarity">
    <text evidence="1">Belongs to the CTP synthase family.</text>
</comment>
<name>PYRG_THISH</name>
<gene>
    <name evidence="1" type="primary">pyrG</name>
    <name type="ordered locus">Tgr7_1182</name>
</gene>
<organism>
    <name type="scientific">Thioalkalivibrio sulfidiphilus (strain HL-EbGR7)</name>
    <dbReference type="NCBI Taxonomy" id="396588"/>
    <lineage>
        <taxon>Bacteria</taxon>
        <taxon>Pseudomonadati</taxon>
        <taxon>Pseudomonadota</taxon>
        <taxon>Gammaproteobacteria</taxon>
        <taxon>Chromatiales</taxon>
        <taxon>Ectothiorhodospiraceae</taxon>
        <taxon>Thioalkalivibrio</taxon>
    </lineage>
</organism>
<reference key="1">
    <citation type="journal article" date="2011" name="Stand. Genomic Sci.">
        <title>Complete genome sequence of 'Thioalkalivibrio sulfidophilus' HL-EbGr7.</title>
        <authorList>
            <person name="Muyzer G."/>
            <person name="Sorokin D.Y."/>
            <person name="Mavromatis K."/>
            <person name="Lapidus A."/>
            <person name="Clum A."/>
            <person name="Ivanova N."/>
            <person name="Pati A."/>
            <person name="d'Haeseleer P."/>
            <person name="Woyke T."/>
            <person name="Kyrpides N.C."/>
        </authorList>
    </citation>
    <scope>NUCLEOTIDE SEQUENCE [LARGE SCALE GENOMIC DNA]</scope>
    <source>
        <strain>HL-EbGR7</strain>
    </source>
</reference>
<feature type="chain" id="PRO_1000164964" description="CTP synthase">
    <location>
        <begin position="1"/>
        <end position="547"/>
    </location>
</feature>
<feature type="domain" description="Glutamine amidotransferase type-1" evidence="1">
    <location>
        <begin position="290"/>
        <end position="541"/>
    </location>
</feature>
<feature type="region of interest" description="Amidoligase domain" evidence="1">
    <location>
        <begin position="1"/>
        <end position="265"/>
    </location>
</feature>
<feature type="active site" description="Nucleophile; for glutamine hydrolysis" evidence="1">
    <location>
        <position position="378"/>
    </location>
</feature>
<feature type="active site" evidence="1">
    <location>
        <position position="514"/>
    </location>
</feature>
<feature type="active site" evidence="1">
    <location>
        <position position="516"/>
    </location>
</feature>
<feature type="binding site" evidence="1">
    <location>
        <position position="13"/>
    </location>
    <ligand>
        <name>CTP</name>
        <dbReference type="ChEBI" id="CHEBI:37563"/>
        <note>allosteric inhibitor</note>
    </ligand>
</feature>
<feature type="binding site" evidence="1">
    <location>
        <position position="13"/>
    </location>
    <ligand>
        <name>UTP</name>
        <dbReference type="ChEBI" id="CHEBI:46398"/>
    </ligand>
</feature>
<feature type="binding site" evidence="1">
    <location>
        <begin position="14"/>
        <end position="19"/>
    </location>
    <ligand>
        <name>ATP</name>
        <dbReference type="ChEBI" id="CHEBI:30616"/>
    </ligand>
</feature>
<feature type="binding site" evidence="1">
    <location>
        <position position="71"/>
    </location>
    <ligand>
        <name>ATP</name>
        <dbReference type="ChEBI" id="CHEBI:30616"/>
    </ligand>
</feature>
<feature type="binding site" evidence="1">
    <location>
        <position position="71"/>
    </location>
    <ligand>
        <name>Mg(2+)</name>
        <dbReference type="ChEBI" id="CHEBI:18420"/>
    </ligand>
</feature>
<feature type="binding site" evidence="1">
    <location>
        <position position="139"/>
    </location>
    <ligand>
        <name>Mg(2+)</name>
        <dbReference type="ChEBI" id="CHEBI:18420"/>
    </ligand>
</feature>
<feature type="binding site" evidence="1">
    <location>
        <begin position="146"/>
        <end position="148"/>
    </location>
    <ligand>
        <name>CTP</name>
        <dbReference type="ChEBI" id="CHEBI:37563"/>
        <note>allosteric inhibitor</note>
    </ligand>
</feature>
<feature type="binding site" evidence="1">
    <location>
        <begin position="186"/>
        <end position="191"/>
    </location>
    <ligand>
        <name>CTP</name>
        <dbReference type="ChEBI" id="CHEBI:37563"/>
        <note>allosteric inhibitor</note>
    </ligand>
</feature>
<feature type="binding site" evidence="1">
    <location>
        <begin position="186"/>
        <end position="191"/>
    </location>
    <ligand>
        <name>UTP</name>
        <dbReference type="ChEBI" id="CHEBI:46398"/>
    </ligand>
</feature>
<feature type="binding site" evidence="1">
    <location>
        <position position="222"/>
    </location>
    <ligand>
        <name>CTP</name>
        <dbReference type="ChEBI" id="CHEBI:37563"/>
        <note>allosteric inhibitor</note>
    </ligand>
</feature>
<feature type="binding site" evidence="1">
    <location>
        <position position="222"/>
    </location>
    <ligand>
        <name>UTP</name>
        <dbReference type="ChEBI" id="CHEBI:46398"/>
    </ligand>
</feature>
<feature type="binding site" evidence="1">
    <location>
        <position position="351"/>
    </location>
    <ligand>
        <name>L-glutamine</name>
        <dbReference type="ChEBI" id="CHEBI:58359"/>
    </ligand>
</feature>
<feature type="binding site" evidence="1">
    <location>
        <begin position="379"/>
        <end position="382"/>
    </location>
    <ligand>
        <name>L-glutamine</name>
        <dbReference type="ChEBI" id="CHEBI:58359"/>
    </ligand>
</feature>
<feature type="binding site" evidence="1">
    <location>
        <position position="402"/>
    </location>
    <ligand>
        <name>L-glutamine</name>
        <dbReference type="ChEBI" id="CHEBI:58359"/>
    </ligand>
</feature>
<feature type="binding site" evidence="1">
    <location>
        <position position="469"/>
    </location>
    <ligand>
        <name>L-glutamine</name>
        <dbReference type="ChEBI" id="CHEBI:58359"/>
    </ligand>
</feature>